<reference key="1">
    <citation type="journal article" date="1998" name="Genetics">
        <title>The role of gene conversion in determining sequence variation and divergence in the Est-5 gene family in Drosophila pseudoobscura.</title>
        <authorList>
            <person name="King L.M."/>
        </authorList>
    </citation>
    <scope>NUCLEOTIDE SEQUENCE [GENOMIC DNA]</scope>
</reference>
<comment type="catalytic activity">
    <reaction evidence="4">
        <text>a carboxylic ester + H2O = an alcohol + a carboxylate + H(+)</text>
        <dbReference type="Rhea" id="RHEA:21164"/>
        <dbReference type="ChEBI" id="CHEBI:15377"/>
        <dbReference type="ChEBI" id="CHEBI:15378"/>
        <dbReference type="ChEBI" id="CHEBI:29067"/>
        <dbReference type="ChEBI" id="CHEBI:30879"/>
        <dbReference type="ChEBI" id="CHEBI:33308"/>
        <dbReference type="EC" id="3.1.1.1"/>
    </reaction>
</comment>
<comment type="subunit">
    <text evidence="2">Homodimer.</text>
</comment>
<comment type="subcellular location">
    <subcellularLocation>
        <location>Secreted</location>
    </subcellularLocation>
</comment>
<comment type="similarity">
    <text evidence="5">Belongs to the type-B carboxylesterase/lipase family.</text>
</comment>
<evidence type="ECO:0000250" key="1"/>
<evidence type="ECO:0000250" key="2">
    <source>
        <dbReference type="UniProtKB" id="P25726"/>
    </source>
</evidence>
<evidence type="ECO:0000255" key="3"/>
<evidence type="ECO:0000255" key="4">
    <source>
        <dbReference type="PROSITE-ProRule" id="PRU10039"/>
    </source>
</evidence>
<evidence type="ECO:0000305" key="5"/>
<proteinExistence type="inferred from homology"/>
<accession>O16172</accession>
<keyword id="KW-1015">Disulfide bond</keyword>
<keyword id="KW-0325">Glycoprotein</keyword>
<keyword id="KW-0378">Hydrolase</keyword>
<keyword id="KW-0964">Secreted</keyword>
<keyword id="KW-0719">Serine esterase</keyword>
<keyword id="KW-0732">Signal</keyword>
<feature type="signal peptide" evidence="3">
    <location>
        <begin position="1"/>
        <end position="19"/>
    </location>
</feature>
<feature type="chain" id="PRO_0000008556" description="Esterase-5B">
    <location>
        <begin position="20"/>
        <end position="545"/>
    </location>
</feature>
<feature type="active site" description="Acyl-ester intermediate" evidence="4">
    <location>
        <position position="207"/>
    </location>
</feature>
<feature type="active site" description="Charge relay system" evidence="1">
    <location>
        <position position="467"/>
    </location>
</feature>
<feature type="glycosylation site" description="N-linked (GlcNAc...) asparagine" evidence="3">
    <location>
        <position position="113"/>
    </location>
</feature>
<feature type="glycosylation site" description="N-linked (GlcNAc...) asparagine" evidence="3">
    <location>
        <position position="421"/>
    </location>
</feature>
<feature type="glycosylation site" description="N-linked (GlcNAc...) asparagine" evidence="3">
    <location>
        <position position="507"/>
    </location>
</feature>
<feature type="disulfide bond" evidence="1">
    <location>
        <begin position="84"/>
        <end position="103"/>
    </location>
</feature>
<feature type="disulfide bond" evidence="1">
    <location>
        <begin position="259"/>
        <end position="271"/>
    </location>
</feature>
<feature type="disulfide bond" evidence="3">
    <location>
        <begin position="515"/>
        <end position="536"/>
    </location>
</feature>
<dbReference type="EC" id="3.1.1.1"/>
<dbReference type="EMBL" id="AF016110">
    <property type="protein sequence ID" value="AAB70223.1"/>
    <property type="molecule type" value="Genomic_DNA"/>
</dbReference>
<dbReference type="SMR" id="O16172"/>
<dbReference type="ESTHER" id="drope-est5b">
    <property type="family name" value="Carb_B_Arthropoda"/>
</dbReference>
<dbReference type="MEROPS" id="S09.947"/>
<dbReference type="GlyCosmos" id="O16172">
    <property type="glycosylation" value="3 sites, No reported glycans"/>
</dbReference>
<dbReference type="eggNOG" id="KOG1516">
    <property type="taxonomic scope" value="Eukaryota"/>
</dbReference>
<dbReference type="OrthoDB" id="6846267at2759"/>
<dbReference type="GO" id="GO:0005576">
    <property type="term" value="C:extracellular region"/>
    <property type="evidence" value="ECO:0007669"/>
    <property type="project" value="UniProtKB-SubCell"/>
</dbReference>
<dbReference type="GO" id="GO:0106435">
    <property type="term" value="F:carboxylesterase activity"/>
    <property type="evidence" value="ECO:0007669"/>
    <property type="project" value="UniProtKB-EC"/>
</dbReference>
<dbReference type="CDD" id="cd00312">
    <property type="entry name" value="Esterase_lipase"/>
    <property type="match status" value="1"/>
</dbReference>
<dbReference type="FunFam" id="3.40.50.1820:FF:000378">
    <property type="entry name" value="Carboxylic ester hydrolase"/>
    <property type="match status" value="1"/>
</dbReference>
<dbReference type="Gene3D" id="3.40.50.1820">
    <property type="entry name" value="alpha/beta hydrolase"/>
    <property type="match status" value="1"/>
</dbReference>
<dbReference type="InterPro" id="IPR029058">
    <property type="entry name" value="AB_hydrolase_fold"/>
</dbReference>
<dbReference type="InterPro" id="IPR002018">
    <property type="entry name" value="CarbesteraseB"/>
</dbReference>
<dbReference type="InterPro" id="IPR019826">
    <property type="entry name" value="Carboxylesterase_B_AS"/>
</dbReference>
<dbReference type="InterPro" id="IPR019819">
    <property type="entry name" value="Carboxylesterase_B_CS"/>
</dbReference>
<dbReference type="PANTHER" id="PTHR43142">
    <property type="entry name" value="CARBOXYLIC ESTER HYDROLASE"/>
    <property type="match status" value="1"/>
</dbReference>
<dbReference type="PANTHER" id="PTHR43142:SF1">
    <property type="entry name" value="CARBOXYLIC ESTER HYDROLASE"/>
    <property type="match status" value="1"/>
</dbReference>
<dbReference type="Pfam" id="PF00135">
    <property type="entry name" value="COesterase"/>
    <property type="match status" value="1"/>
</dbReference>
<dbReference type="SUPFAM" id="SSF53474">
    <property type="entry name" value="alpha/beta-Hydrolases"/>
    <property type="match status" value="1"/>
</dbReference>
<dbReference type="PROSITE" id="PS00122">
    <property type="entry name" value="CARBOXYLESTERASE_B_1"/>
    <property type="match status" value="1"/>
</dbReference>
<dbReference type="PROSITE" id="PS00941">
    <property type="entry name" value="CARBOXYLESTERASE_B_2"/>
    <property type="match status" value="1"/>
</dbReference>
<name>EST5B_DROPE</name>
<gene>
    <name type="primary">Est-5B</name>
    <name type="synonym">Est5B</name>
</gene>
<sequence length="545" mass="60729">MYCAKLILLLGCFWISSSASDPADPLLVDLPNGKLRGRDNGNYYSYESLPYAEPPVGDLRFEAPQPYKQQWTDTFDATQPPVSCMQWDQFIRGDDKLAGNEDCLTVSVYRPKNSSRNSFPVVAQIHGGAFMFGGASQNGHENFMREGNLILVKISYRLGPLGFVSTGDADLSGNFGLKDQRLALLWIKQNIASFGGEPENILVIGHSAGGGSVHLQVLREDFSKVAKAAISFSGNALDPWVVQQGGRGRAFELGRIVGCGQASDSVTLKKCLKSKPASEIVSAVRNFLVFAYVPFTPFGPVVESPDAPEAFISQHPVDIIKSGKFAQVPWAVTYTTEDGGYNAALLLEEQASSGREWIVDLNDRWFDWAPYLLFYRDSMTTIKDMDDYSRKLRQEYLGDRRFSVESYWDLQRLFTDVLFKNSTEISLDLHRKHGKSPVYAFVYDNPANTGIGQGLAQRTDINFGTVHGDDYFLIFENIVREPQLRSDEETISRNFLKMLNDFVLSENGTLAFGTCVFQDNVGSSKLQLLSITRNGCENLELESFP</sequence>
<organism>
    <name type="scientific">Drosophila persimilis</name>
    <name type="common">Fruit fly</name>
    <dbReference type="NCBI Taxonomy" id="7234"/>
    <lineage>
        <taxon>Eukaryota</taxon>
        <taxon>Metazoa</taxon>
        <taxon>Ecdysozoa</taxon>
        <taxon>Arthropoda</taxon>
        <taxon>Hexapoda</taxon>
        <taxon>Insecta</taxon>
        <taxon>Pterygota</taxon>
        <taxon>Neoptera</taxon>
        <taxon>Endopterygota</taxon>
        <taxon>Diptera</taxon>
        <taxon>Brachycera</taxon>
        <taxon>Muscomorpha</taxon>
        <taxon>Ephydroidea</taxon>
        <taxon>Drosophilidae</taxon>
        <taxon>Drosophila</taxon>
        <taxon>Sophophora</taxon>
    </lineage>
</organism>
<protein>
    <recommendedName>
        <fullName>Esterase-5B</fullName>
        <shortName>Est-5B</shortName>
        <ecNumber>3.1.1.1</ecNumber>
    </recommendedName>
    <alternativeName>
        <fullName>Carboxylic-ester hydrolase 5B</fullName>
        <shortName>Carboxylesterase-5B</shortName>
    </alternativeName>
</protein>